<feature type="chain" id="PRO_1000196060" description="Large ribosomal subunit protein bL34">
    <location>
        <begin position="1"/>
        <end position="46"/>
    </location>
</feature>
<feature type="region of interest" description="Disordered" evidence="2">
    <location>
        <begin position="26"/>
        <end position="46"/>
    </location>
</feature>
<protein>
    <recommendedName>
        <fullName evidence="1">Large ribosomal subunit protein bL34</fullName>
    </recommendedName>
    <alternativeName>
        <fullName evidence="3">50S ribosomal protein L34</fullName>
    </alternativeName>
</protein>
<accession>B3WBV7</accession>
<gene>
    <name evidence="1" type="primary">rpmH</name>
    <name type="ordered locus">LCABL_31270</name>
</gene>
<name>RL34_LACCB</name>
<evidence type="ECO:0000255" key="1">
    <source>
        <dbReference type="HAMAP-Rule" id="MF_00391"/>
    </source>
</evidence>
<evidence type="ECO:0000256" key="2">
    <source>
        <dbReference type="SAM" id="MobiDB-lite"/>
    </source>
</evidence>
<evidence type="ECO:0000305" key="3"/>
<organism>
    <name type="scientific">Lacticaseibacillus casei (strain BL23)</name>
    <name type="common">Lactobacillus casei</name>
    <dbReference type="NCBI Taxonomy" id="543734"/>
    <lineage>
        <taxon>Bacteria</taxon>
        <taxon>Bacillati</taxon>
        <taxon>Bacillota</taxon>
        <taxon>Bacilli</taxon>
        <taxon>Lactobacillales</taxon>
        <taxon>Lactobacillaceae</taxon>
        <taxon>Lacticaseibacillus</taxon>
    </lineage>
</organism>
<sequence length="46" mass="5523">MTTKRTFQPKKRHRERVHGFMKRMSTKNGRKVLARRRAKGRKVLSA</sequence>
<reference key="1">
    <citation type="submission" date="2008-06" db="EMBL/GenBank/DDBJ databases">
        <title>Lactobacillus casei BL23 complete genome sequence.</title>
        <authorList>
            <person name="Maze A."/>
            <person name="Boel G."/>
            <person name="Bourand A."/>
            <person name="Loux V."/>
            <person name="Gibrat J.F."/>
            <person name="Zuniga M."/>
            <person name="Hartke A."/>
            <person name="Deutscher J."/>
        </authorList>
    </citation>
    <scope>NUCLEOTIDE SEQUENCE [LARGE SCALE GENOMIC DNA]</scope>
    <source>
        <strain>BL23</strain>
    </source>
</reference>
<dbReference type="EMBL" id="FM177140">
    <property type="protein sequence ID" value="CAQ68176.1"/>
    <property type="molecule type" value="Genomic_DNA"/>
</dbReference>
<dbReference type="SMR" id="B3WBV7"/>
<dbReference type="KEGG" id="lcb:LCABL_31270"/>
<dbReference type="HOGENOM" id="CLU_129938_2_0_9"/>
<dbReference type="GO" id="GO:1990904">
    <property type="term" value="C:ribonucleoprotein complex"/>
    <property type="evidence" value="ECO:0007669"/>
    <property type="project" value="UniProtKB-KW"/>
</dbReference>
<dbReference type="GO" id="GO:0005840">
    <property type="term" value="C:ribosome"/>
    <property type="evidence" value="ECO:0007669"/>
    <property type="project" value="UniProtKB-KW"/>
</dbReference>
<dbReference type="GO" id="GO:0003735">
    <property type="term" value="F:structural constituent of ribosome"/>
    <property type="evidence" value="ECO:0007669"/>
    <property type="project" value="InterPro"/>
</dbReference>
<dbReference type="GO" id="GO:0006412">
    <property type="term" value="P:translation"/>
    <property type="evidence" value="ECO:0007669"/>
    <property type="project" value="UniProtKB-UniRule"/>
</dbReference>
<dbReference type="FunFam" id="1.10.287.3980:FF:000001">
    <property type="entry name" value="Mitochondrial ribosomal protein L34"/>
    <property type="match status" value="1"/>
</dbReference>
<dbReference type="Gene3D" id="1.10.287.3980">
    <property type="match status" value="1"/>
</dbReference>
<dbReference type="HAMAP" id="MF_00391">
    <property type="entry name" value="Ribosomal_bL34"/>
    <property type="match status" value="1"/>
</dbReference>
<dbReference type="InterPro" id="IPR000271">
    <property type="entry name" value="Ribosomal_bL34"/>
</dbReference>
<dbReference type="InterPro" id="IPR020939">
    <property type="entry name" value="Ribosomal_bL34_CS"/>
</dbReference>
<dbReference type="NCBIfam" id="TIGR01030">
    <property type="entry name" value="rpmH_bact"/>
    <property type="match status" value="1"/>
</dbReference>
<dbReference type="PANTHER" id="PTHR14503:SF4">
    <property type="entry name" value="LARGE RIBOSOMAL SUBUNIT PROTEIN BL34M"/>
    <property type="match status" value="1"/>
</dbReference>
<dbReference type="PANTHER" id="PTHR14503">
    <property type="entry name" value="MITOCHONDRIAL RIBOSOMAL PROTEIN 34 FAMILY MEMBER"/>
    <property type="match status" value="1"/>
</dbReference>
<dbReference type="Pfam" id="PF00468">
    <property type="entry name" value="Ribosomal_L34"/>
    <property type="match status" value="1"/>
</dbReference>
<dbReference type="PROSITE" id="PS00784">
    <property type="entry name" value="RIBOSOMAL_L34"/>
    <property type="match status" value="1"/>
</dbReference>
<proteinExistence type="inferred from homology"/>
<keyword id="KW-0687">Ribonucleoprotein</keyword>
<keyword id="KW-0689">Ribosomal protein</keyword>
<comment type="similarity">
    <text evidence="1">Belongs to the bacterial ribosomal protein bL34 family.</text>
</comment>